<sequence length="276" mass="31342">MELRTAASPKDVKHYTTDRLREEFLIDDLFKVNEIKLVYSHIDRIITGSAVPVNQELKLTAGDELRAEYFLQRREMGIINIGGKGTITIDGTVYELEYKDGMYIGMGAKDISFASVDATNPAKFYINSAPAHTSYPTVLIKPENCVNVELGSLEGSNHRVICKYILPGQVESCQLVMGMTQLKPGSVWNTMPCHTHDRRMEVYLYFDMQENDMVFHYMGEPTETRHIIMRNEQAVISPSWSIHSGCGTKAYTFIWGMVGENQDFDDMDACDLKDLR</sequence>
<feature type="chain" id="PRO_1000083088" description="4-deoxy-L-threo-5-hexosulose-uronate ketol-isomerase">
    <location>
        <begin position="1"/>
        <end position="276"/>
    </location>
</feature>
<feature type="binding site" evidence="1">
    <location>
        <position position="194"/>
    </location>
    <ligand>
        <name>Zn(2+)</name>
        <dbReference type="ChEBI" id="CHEBI:29105"/>
    </ligand>
</feature>
<feature type="binding site" evidence="1">
    <location>
        <position position="196"/>
    </location>
    <ligand>
        <name>Zn(2+)</name>
        <dbReference type="ChEBI" id="CHEBI:29105"/>
    </ligand>
</feature>
<feature type="binding site" evidence="1">
    <location>
        <position position="201"/>
    </location>
    <ligand>
        <name>Zn(2+)</name>
        <dbReference type="ChEBI" id="CHEBI:29105"/>
    </ligand>
</feature>
<feature type="binding site" evidence="1">
    <location>
        <position position="243"/>
    </location>
    <ligand>
        <name>Zn(2+)</name>
        <dbReference type="ChEBI" id="CHEBI:29105"/>
    </ligand>
</feature>
<proteinExistence type="inferred from homology"/>
<gene>
    <name evidence="1" type="primary">kduI</name>
    <name type="ordered locus">Cphy_2738</name>
</gene>
<comment type="function">
    <text evidence="1">Catalyzes the isomerization of 5-dehydro-4-deoxy-D-glucuronate to 3-deoxy-D-glycero-2,5-hexodiulosonate.</text>
</comment>
<comment type="catalytic activity">
    <reaction evidence="1">
        <text>5-dehydro-4-deoxy-D-glucuronate = 3-deoxy-D-glycero-2,5-hexodiulosonate</text>
        <dbReference type="Rhea" id="RHEA:23896"/>
        <dbReference type="ChEBI" id="CHEBI:17117"/>
        <dbReference type="ChEBI" id="CHEBI:29071"/>
        <dbReference type="EC" id="5.3.1.17"/>
    </reaction>
</comment>
<comment type="cofactor">
    <cofactor evidence="1">
        <name>Zn(2+)</name>
        <dbReference type="ChEBI" id="CHEBI:29105"/>
    </cofactor>
    <text evidence="1">Binds 1 zinc ion per subunit.</text>
</comment>
<comment type="pathway">
    <text evidence="1">Glycan metabolism; pectin degradation; 2-dehydro-3-deoxy-D-gluconate from pectin: step 4/5.</text>
</comment>
<comment type="similarity">
    <text evidence="1">Belongs to the KduI family.</text>
</comment>
<accession>A9KNI2</accession>
<name>KDUI_LACP7</name>
<organism>
    <name type="scientific">Lachnoclostridium phytofermentans (strain ATCC 700394 / DSM 18823 / ISDg)</name>
    <name type="common">Clostridium phytofermentans</name>
    <dbReference type="NCBI Taxonomy" id="357809"/>
    <lineage>
        <taxon>Bacteria</taxon>
        <taxon>Bacillati</taxon>
        <taxon>Bacillota</taxon>
        <taxon>Clostridia</taxon>
        <taxon>Lachnospirales</taxon>
        <taxon>Lachnospiraceae</taxon>
    </lineage>
</organism>
<dbReference type="EC" id="5.3.1.17" evidence="1"/>
<dbReference type="EMBL" id="CP000885">
    <property type="protein sequence ID" value="ABX43099.1"/>
    <property type="molecule type" value="Genomic_DNA"/>
</dbReference>
<dbReference type="RefSeq" id="WP_012200750.1">
    <property type="nucleotide sequence ID" value="NC_010001.1"/>
</dbReference>
<dbReference type="SMR" id="A9KNI2"/>
<dbReference type="STRING" id="357809.Cphy_2738"/>
<dbReference type="KEGG" id="cpy:Cphy_2738"/>
<dbReference type="eggNOG" id="COG3717">
    <property type="taxonomic scope" value="Bacteria"/>
</dbReference>
<dbReference type="HOGENOM" id="CLU_062609_0_0_9"/>
<dbReference type="OrthoDB" id="9770644at2"/>
<dbReference type="UniPathway" id="UPA00545">
    <property type="reaction ID" value="UER00826"/>
</dbReference>
<dbReference type="Proteomes" id="UP000000370">
    <property type="component" value="Chromosome"/>
</dbReference>
<dbReference type="GO" id="GO:0008697">
    <property type="term" value="F:4-deoxy-L-threo-5-hexosulose-uronate ketol-isomerase activity"/>
    <property type="evidence" value="ECO:0007669"/>
    <property type="project" value="UniProtKB-UniRule"/>
</dbReference>
<dbReference type="GO" id="GO:0008270">
    <property type="term" value="F:zinc ion binding"/>
    <property type="evidence" value="ECO:0007669"/>
    <property type="project" value="UniProtKB-UniRule"/>
</dbReference>
<dbReference type="GO" id="GO:0019698">
    <property type="term" value="P:D-galacturonate catabolic process"/>
    <property type="evidence" value="ECO:0007669"/>
    <property type="project" value="TreeGrafter"/>
</dbReference>
<dbReference type="GO" id="GO:0042840">
    <property type="term" value="P:D-glucuronate catabolic process"/>
    <property type="evidence" value="ECO:0007669"/>
    <property type="project" value="TreeGrafter"/>
</dbReference>
<dbReference type="GO" id="GO:0045490">
    <property type="term" value="P:pectin catabolic process"/>
    <property type="evidence" value="ECO:0007669"/>
    <property type="project" value="UniProtKB-UniRule"/>
</dbReference>
<dbReference type="CDD" id="cd20491">
    <property type="entry name" value="cupin_KduI_C"/>
    <property type="match status" value="1"/>
</dbReference>
<dbReference type="CDD" id="cd20294">
    <property type="entry name" value="cupin_KduI_N"/>
    <property type="match status" value="1"/>
</dbReference>
<dbReference type="Gene3D" id="2.60.120.10">
    <property type="entry name" value="Jelly Rolls"/>
    <property type="match status" value="1"/>
</dbReference>
<dbReference type="Gene3D" id="2.60.120.520">
    <property type="entry name" value="pectin degrading enzyme 5-keto 4- deoxyuronate isomerase, domain 1"/>
    <property type="match status" value="1"/>
</dbReference>
<dbReference type="HAMAP" id="MF_00687">
    <property type="entry name" value="KduI"/>
    <property type="match status" value="1"/>
</dbReference>
<dbReference type="InterPro" id="IPR007045">
    <property type="entry name" value="KduI"/>
</dbReference>
<dbReference type="InterPro" id="IPR021120">
    <property type="entry name" value="KduI/IolB_isomerase"/>
</dbReference>
<dbReference type="InterPro" id="IPR027449">
    <property type="entry name" value="KduI_N"/>
</dbReference>
<dbReference type="InterPro" id="IPR014710">
    <property type="entry name" value="RmlC-like_jellyroll"/>
</dbReference>
<dbReference type="InterPro" id="IPR011051">
    <property type="entry name" value="RmlC_Cupin_sf"/>
</dbReference>
<dbReference type="NCBIfam" id="NF002091">
    <property type="entry name" value="PRK00924.1"/>
    <property type="match status" value="1"/>
</dbReference>
<dbReference type="PANTHER" id="PTHR38461">
    <property type="entry name" value="4-DEOXY-L-THREO-5-HEXOSULOSE-URONATE KETOL-ISOMERASE"/>
    <property type="match status" value="1"/>
</dbReference>
<dbReference type="PANTHER" id="PTHR38461:SF1">
    <property type="entry name" value="4-DEOXY-L-THREO-5-HEXOSULOSE-URONATE KETOL-ISOMERASE"/>
    <property type="match status" value="1"/>
</dbReference>
<dbReference type="Pfam" id="PF04962">
    <property type="entry name" value="KduI"/>
    <property type="match status" value="1"/>
</dbReference>
<dbReference type="PIRSF" id="PIRSF006625">
    <property type="entry name" value="KduI"/>
    <property type="match status" value="1"/>
</dbReference>
<dbReference type="SUPFAM" id="SSF51182">
    <property type="entry name" value="RmlC-like cupins"/>
    <property type="match status" value="1"/>
</dbReference>
<reference key="1">
    <citation type="submission" date="2007-11" db="EMBL/GenBank/DDBJ databases">
        <title>Complete genome sequence of Clostridium phytofermentans ISDg.</title>
        <authorList>
            <person name="Leschine S.B."/>
            <person name="Warnick T.A."/>
            <person name="Blanchard J.L."/>
            <person name="Schnell D.J."/>
            <person name="Petit E.L."/>
            <person name="LaTouf W.G."/>
            <person name="Copeland A."/>
            <person name="Lucas S."/>
            <person name="Lapidus A."/>
            <person name="Barry K."/>
            <person name="Glavina del Rio T."/>
            <person name="Dalin E."/>
            <person name="Tice H."/>
            <person name="Pitluck S."/>
            <person name="Kiss H."/>
            <person name="Brettin T."/>
            <person name="Bruce D."/>
            <person name="Detter J.C."/>
            <person name="Han C."/>
            <person name="Kuske C."/>
            <person name="Schmutz J."/>
            <person name="Larimer F."/>
            <person name="Land M."/>
            <person name="Hauser L."/>
            <person name="Kyrpides N."/>
            <person name="Kim E.A."/>
            <person name="Richardson P."/>
        </authorList>
    </citation>
    <scope>NUCLEOTIDE SEQUENCE [LARGE SCALE GENOMIC DNA]</scope>
    <source>
        <strain>ATCC 700394 / DSM 18823 / ISDg</strain>
    </source>
</reference>
<protein>
    <recommendedName>
        <fullName evidence="1">4-deoxy-L-threo-5-hexosulose-uronate ketol-isomerase</fullName>
        <ecNumber evidence="1">5.3.1.17</ecNumber>
    </recommendedName>
    <alternativeName>
        <fullName evidence="1">5-keto-4-deoxyuronate isomerase</fullName>
    </alternativeName>
    <alternativeName>
        <fullName evidence="1">DKI isomerase</fullName>
    </alternativeName>
</protein>
<keyword id="KW-0413">Isomerase</keyword>
<keyword id="KW-0479">Metal-binding</keyword>
<keyword id="KW-1185">Reference proteome</keyword>
<keyword id="KW-0862">Zinc</keyword>
<evidence type="ECO:0000255" key="1">
    <source>
        <dbReference type="HAMAP-Rule" id="MF_00687"/>
    </source>
</evidence>